<accession>A9N2E5</accession>
<proteinExistence type="inferred from homology"/>
<evidence type="ECO:0000255" key="1">
    <source>
        <dbReference type="HAMAP-Rule" id="MF_01540"/>
    </source>
</evidence>
<organism>
    <name type="scientific">Salmonella paratyphi B (strain ATCC BAA-1250 / SPB7)</name>
    <dbReference type="NCBI Taxonomy" id="1016998"/>
    <lineage>
        <taxon>Bacteria</taxon>
        <taxon>Pseudomonadati</taxon>
        <taxon>Pseudomonadota</taxon>
        <taxon>Gammaproteobacteria</taxon>
        <taxon>Enterobacterales</taxon>
        <taxon>Enterobacteriaceae</taxon>
        <taxon>Salmonella</taxon>
    </lineage>
</organism>
<gene>
    <name evidence="1" type="primary">cysI</name>
    <name type="ordered locus">SPAB_03656</name>
</gene>
<comment type="function">
    <text evidence="1">Component of the sulfite reductase complex that catalyzes the 6-electron reduction of sulfite to sulfide. This is one of several activities required for the biosynthesis of L-cysteine from sulfate.</text>
</comment>
<comment type="catalytic activity">
    <reaction evidence="1">
        <text>hydrogen sulfide + 3 NADP(+) + 3 H2O = sulfite + 3 NADPH + 4 H(+)</text>
        <dbReference type="Rhea" id="RHEA:13801"/>
        <dbReference type="ChEBI" id="CHEBI:15377"/>
        <dbReference type="ChEBI" id="CHEBI:15378"/>
        <dbReference type="ChEBI" id="CHEBI:17359"/>
        <dbReference type="ChEBI" id="CHEBI:29919"/>
        <dbReference type="ChEBI" id="CHEBI:57783"/>
        <dbReference type="ChEBI" id="CHEBI:58349"/>
        <dbReference type="EC" id="1.8.1.2"/>
    </reaction>
</comment>
<comment type="cofactor">
    <cofactor evidence="1">
        <name>siroheme</name>
        <dbReference type="ChEBI" id="CHEBI:60052"/>
    </cofactor>
    <text evidence="1">Binds 1 siroheme per subunit.</text>
</comment>
<comment type="cofactor">
    <cofactor evidence="1">
        <name>[4Fe-4S] cluster</name>
        <dbReference type="ChEBI" id="CHEBI:49883"/>
    </cofactor>
    <text evidence="1">Binds 1 [4Fe-4S] cluster per subunit.</text>
</comment>
<comment type="pathway">
    <text evidence="1">Sulfur metabolism; hydrogen sulfide biosynthesis; hydrogen sulfide from sulfite (NADPH route): step 1/1.</text>
</comment>
<comment type="subunit">
    <text evidence="1">Alpha(8)-beta(8). The alpha component is a flavoprotein, the beta component is a hemoprotein.</text>
</comment>
<comment type="similarity">
    <text evidence="1">Belongs to the nitrite and sulfite reductase 4Fe-4S domain family.</text>
</comment>
<name>CYSI_SALPB</name>
<keyword id="KW-0004">4Fe-4S</keyword>
<keyword id="KW-0028">Amino-acid biosynthesis</keyword>
<keyword id="KW-0198">Cysteine biosynthesis</keyword>
<keyword id="KW-0349">Heme</keyword>
<keyword id="KW-0408">Iron</keyword>
<keyword id="KW-0411">Iron-sulfur</keyword>
<keyword id="KW-0479">Metal-binding</keyword>
<keyword id="KW-0521">NADP</keyword>
<keyword id="KW-0560">Oxidoreductase</keyword>
<protein>
    <recommendedName>
        <fullName evidence="1">Sulfite reductase [NADPH] hemoprotein beta-component</fullName>
        <shortName evidence="1">SiR-HP</shortName>
        <shortName evidence="1">SiRHP</shortName>
        <ecNumber evidence="1">1.8.1.2</ecNumber>
    </recommendedName>
</protein>
<reference key="1">
    <citation type="submission" date="2007-11" db="EMBL/GenBank/DDBJ databases">
        <authorList>
            <consortium name="The Salmonella enterica serovar Paratyphi B Genome Sequencing Project"/>
            <person name="McClelland M."/>
            <person name="Sanderson E.K."/>
            <person name="Porwollik S."/>
            <person name="Spieth J."/>
            <person name="Clifton W.S."/>
            <person name="Fulton R."/>
            <person name="Cordes M."/>
            <person name="Wollam A."/>
            <person name="Shah N."/>
            <person name="Pepin K."/>
            <person name="Bhonagiri V."/>
            <person name="Nash W."/>
            <person name="Johnson M."/>
            <person name="Thiruvilangam P."/>
            <person name="Wilson R."/>
        </authorList>
    </citation>
    <scope>NUCLEOTIDE SEQUENCE [LARGE SCALE GENOMIC DNA]</scope>
    <source>
        <strain>ATCC BAA-1250 / SPB7</strain>
    </source>
</reference>
<feature type="chain" id="PRO_1000087629" description="Sulfite reductase [NADPH] hemoprotein beta-component">
    <location>
        <begin position="1"/>
        <end position="570"/>
    </location>
</feature>
<feature type="binding site" evidence="1">
    <location>
        <position position="434"/>
    </location>
    <ligand>
        <name>[4Fe-4S] cluster</name>
        <dbReference type="ChEBI" id="CHEBI:49883"/>
    </ligand>
</feature>
<feature type="binding site" evidence="1">
    <location>
        <position position="440"/>
    </location>
    <ligand>
        <name>[4Fe-4S] cluster</name>
        <dbReference type="ChEBI" id="CHEBI:49883"/>
    </ligand>
</feature>
<feature type="binding site" evidence="1">
    <location>
        <position position="479"/>
    </location>
    <ligand>
        <name>[4Fe-4S] cluster</name>
        <dbReference type="ChEBI" id="CHEBI:49883"/>
    </ligand>
</feature>
<feature type="binding site" evidence="1">
    <location>
        <position position="483"/>
    </location>
    <ligand>
        <name>[4Fe-4S] cluster</name>
        <dbReference type="ChEBI" id="CHEBI:49883"/>
    </ligand>
</feature>
<feature type="binding site" description="axial binding residue" evidence="1">
    <location>
        <position position="483"/>
    </location>
    <ligand>
        <name>siroheme</name>
        <dbReference type="ChEBI" id="CHEBI:60052"/>
    </ligand>
    <ligandPart>
        <name>Fe</name>
        <dbReference type="ChEBI" id="CHEBI:18248"/>
    </ligandPart>
</feature>
<sequence>MSEKHPGPLVVEGKLSDAERMKLESNYLRGTIAEDLNDGLTGGFKGDNFLLIRFHGMYQQDDRDIRAERAAQKLEPRHAMLLRCRLPGGVITTTQWQAIDKFAADNTIYGSIRLTNRQTFQFHGILKKNVKPVHQMLHSVGLDALATANDMNRNVLCTSNPYESQLHAEAYEWAKKISEHLLPRTRAYAEIWLDQEKVATTDEEPILGQTYLPRKFKTTVVIPPQNDIDLHANDMNFVAIAENGKLVGFNLLVGGGLSIEHGNKKTYARTASEFGYLPLEHTLAVAEAVVTTQRDWGNRTDRKNAKTKYTLERVGLETFKAEVERRAGIKFEPIRPYEFTGRGDRIGWVKGIDNNWHLTLFIENGRILDYPGRPLKTGLLEIAKIHQGEFRITANQNLIIASVPESQKAKIEKLARDHGLMNAVSAQRENSMACVSFPTCPLAMAEAERFLPSFTDKVEAILEKHGIPDEHIVMRVTGCPNGCGRAMLAELGLVGKAPGRYNVHLGGNRMGTRIPRMYRENITESEILDSVDELVGRWAKEREAGEGFGDFTVRAGIIRPVLDPARDFWE</sequence>
<dbReference type="EC" id="1.8.1.2" evidence="1"/>
<dbReference type="EMBL" id="CP000886">
    <property type="protein sequence ID" value="ABX68996.1"/>
    <property type="molecule type" value="Genomic_DNA"/>
</dbReference>
<dbReference type="RefSeq" id="WP_001290662.1">
    <property type="nucleotide sequence ID" value="NC_010102.1"/>
</dbReference>
<dbReference type="SMR" id="A9N2E5"/>
<dbReference type="KEGG" id="spq:SPAB_03656"/>
<dbReference type="PATRIC" id="fig|1016998.12.peg.3443"/>
<dbReference type="HOGENOM" id="CLU_001975_3_2_6"/>
<dbReference type="BioCyc" id="SENT1016998:SPAB_RS14900-MONOMER"/>
<dbReference type="UniPathway" id="UPA00140">
    <property type="reaction ID" value="UER00207"/>
</dbReference>
<dbReference type="Proteomes" id="UP000008556">
    <property type="component" value="Chromosome"/>
</dbReference>
<dbReference type="GO" id="GO:0009337">
    <property type="term" value="C:sulfite reductase complex (NADPH)"/>
    <property type="evidence" value="ECO:0007669"/>
    <property type="project" value="InterPro"/>
</dbReference>
<dbReference type="GO" id="GO:0051539">
    <property type="term" value="F:4 iron, 4 sulfur cluster binding"/>
    <property type="evidence" value="ECO:0007669"/>
    <property type="project" value="UniProtKB-KW"/>
</dbReference>
<dbReference type="GO" id="GO:0020037">
    <property type="term" value="F:heme binding"/>
    <property type="evidence" value="ECO:0007669"/>
    <property type="project" value="InterPro"/>
</dbReference>
<dbReference type="GO" id="GO:0046872">
    <property type="term" value="F:metal ion binding"/>
    <property type="evidence" value="ECO:0007669"/>
    <property type="project" value="UniProtKB-KW"/>
</dbReference>
<dbReference type="GO" id="GO:0050661">
    <property type="term" value="F:NADP binding"/>
    <property type="evidence" value="ECO:0007669"/>
    <property type="project" value="InterPro"/>
</dbReference>
<dbReference type="GO" id="GO:0050311">
    <property type="term" value="F:sulfite reductase (ferredoxin) activity"/>
    <property type="evidence" value="ECO:0007669"/>
    <property type="project" value="TreeGrafter"/>
</dbReference>
<dbReference type="GO" id="GO:0004783">
    <property type="term" value="F:sulfite reductase (NADPH) activity"/>
    <property type="evidence" value="ECO:0007669"/>
    <property type="project" value="UniProtKB-UniRule"/>
</dbReference>
<dbReference type="GO" id="GO:0019344">
    <property type="term" value="P:cysteine biosynthetic process"/>
    <property type="evidence" value="ECO:0007669"/>
    <property type="project" value="UniProtKB-KW"/>
</dbReference>
<dbReference type="GO" id="GO:0070814">
    <property type="term" value="P:hydrogen sulfide biosynthetic process"/>
    <property type="evidence" value="ECO:0007669"/>
    <property type="project" value="UniProtKB-UniRule"/>
</dbReference>
<dbReference type="GO" id="GO:0000103">
    <property type="term" value="P:sulfate assimilation"/>
    <property type="evidence" value="ECO:0007669"/>
    <property type="project" value="UniProtKB-UniRule"/>
</dbReference>
<dbReference type="FunFam" id="3.30.413.10:FF:000003">
    <property type="entry name" value="Sulfite reductase [NADPH] hemoprotein beta-component"/>
    <property type="match status" value="1"/>
</dbReference>
<dbReference type="FunFam" id="3.30.413.10:FF:000004">
    <property type="entry name" value="Sulfite reductase [NADPH] hemoprotein beta-component"/>
    <property type="match status" value="1"/>
</dbReference>
<dbReference type="Gene3D" id="3.30.413.10">
    <property type="entry name" value="Sulfite Reductase Hemoprotein, domain 1"/>
    <property type="match status" value="2"/>
</dbReference>
<dbReference type="HAMAP" id="MF_01540">
    <property type="entry name" value="CysI"/>
    <property type="match status" value="1"/>
</dbReference>
<dbReference type="InterPro" id="IPR011786">
    <property type="entry name" value="CysI"/>
</dbReference>
<dbReference type="InterPro" id="IPR005117">
    <property type="entry name" value="NiRdtase/SiRdtase_haem-b_fer"/>
</dbReference>
<dbReference type="InterPro" id="IPR036136">
    <property type="entry name" value="Nit/Sulf_reduc_fer-like_dom_sf"/>
</dbReference>
<dbReference type="InterPro" id="IPR006067">
    <property type="entry name" value="NO2/SO3_Rdtase_4Fe4S_dom"/>
</dbReference>
<dbReference type="InterPro" id="IPR045169">
    <property type="entry name" value="NO2/SO3_Rdtase_4Fe4S_prot"/>
</dbReference>
<dbReference type="InterPro" id="IPR045854">
    <property type="entry name" value="NO2/SO3_Rdtase_4Fe4S_sf"/>
</dbReference>
<dbReference type="InterPro" id="IPR006066">
    <property type="entry name" value="NO2/SO3_Rdtase_FeS/sirohaem_BS"/>
</dbReference>
<dbReference type="NCBIfam" id="TIGR02041">
    <property type="entry name" value="CysI"/>
    <property type="match status" value="1"/>
</dbReference>
<dbReference type="NCBIfam" id="NF010029">
    <property type="entry name" value="PRK13504.1"/>
    <property type="match status" value="1"/>
</dbReference>
<dbReference type="PANTHER" id="PTHR11493:SF47">
    <property type="entry name" value="SULFITE REDUCTASE [NADPH] SUBUNIT BETA"/>
    <property type="match status" value="1"/>
</dbReference>
<dbReference type="PANTHER" id="PTHR11493">
    <property type="entry name" value="SULFITE REDUCTASE [NADPH] SUBUNIT BETA-RELATED"/>
    <property type="match status" value="1"/>
</dbReference>
<dbReference type="Pfam" id="PF01077">
    <property type="entry name" value="NIR_SIR"/>
    <property type="match status" value="1"/>
</dbReference>
<dbReference type="Pfam" id="PF03460">
    <property type="entry name" value="NIR_SIR_ferr"/>
    <property type="match status" value="2"/>
</dbReference>
<dbReference type="PRINTS" id="PR00397">
    <property type="entry name" value="SIROHAEM"/>
</dbReference>
<dbReference type="SUPFAM" id="SSF56014">
    <property type="entry name" value="Nitrite and sulphite reductase 4Fe-4S domain-like"/>
    <property type="match status" value="2"/>
</dbReference>
<dbReference type="SUPFAM" id="SSF55124">
    <property type="entry name" value="Nitrite/Sulfite reductase N-terminal domain-like"/>
    <property type="match status" value="2"/>
</dbReference>
<dbReference type="PROSITE" id="PS00365">
    <property type="entry name" value="NIR_SIR"/>
    <property type="match status" value="1"/>
</dbReference>